<keyword id="KW-0378">Hydrolase</keyword>
<keyword id="KW-0479">Metal-binding</keyword>
<keyword id="KW-0862">Zinc</keyword>
<reference key="1">
    <citation type="submission" date="2007-09" db="EMBL/GenBank/DDBJ databases">
        <title>Complete sequence of chromosome of Serratia proteamaculans 568.</title>
        <authorList>
            <consortium name="US DOE Joint Genome Institute"/>
            <person name="Copeland A."/>
            <person name="Lucas S."/>
            <person name="Lapidus A."/>
            <person name="Barry K."/>
            <person name="Glavina del Rio T."/>
            <person name="Dalin E."/>
            <person name="Tice H."/>
            <person name="Pitluck S."/>
            <person name="Chain P."/>
            <person name="Malfatti S."/>
            <person name="Shin M."/>
            <person name="Vergez L."/>
            <person name="Schmutz J."/>
            <person name="Larimer F."/>
            <person name="Land M."/>
            <person name="Hauser L."/>
            <person name="Kyrpides N."/>
            <person name="Kim E."/>
            <person name="Taghavi S."/>
            <person name="Newman L."/>
            <person name="Vangronsveld J."/>
            <person name="van der Lelie D."/>
            <person name="Richardson P."/>
        </authorList>
    </citation>
    <scope>NUCLEOTIDE SEQUENCE [LARGE SCALE GENOMIC DNA]</scope>
    <source>
        <strain>568</strain>
    </source>
</reference>
<organism>
    <name type="scientific">Serratia proteamaculans (strain 568)</name>
    <dbReference type="NCBI Taxonomy" id="399741"/>
    <lineage>
        <taxon>Bacteria</taxon>
        <taxon>Pseudomonadati</taxon>
        <taxon>Pseudomonadota</taxon>
        <taxon>Gammaproteobacteria</taxon>
        <taxon>Enterobacterales</taxon>
        <taxon>Yersiniaceae</taxon>
        <taxon>Serratia</taxon>
    </lineage>
</organism>
<comment type="function">
    <text evidence="1">Thiolesterase that catalyzes the hydrolysis of S-D-lactoyl-glutathione to form glutathione and D-lactic acid.</text>
</comment>
<comment type="catalytic activity">
    <reaction evidence="1">
        <text>an S-(2-hydroxyacyl)glutathione + H2O = a 2-hydroxy carboxylate + glutathione + H(+)</text>
        <dbReference type="Rhea" id="RHEA:21864"/>
        <dbReference type="ChEBI" id="CHEBI:15377"/>
        <dbReference type="ChEBI" id="CHEBI:15378"/>
        <dbReference type="ChEBI" id="CHEBI:57925"/>
        <dbReference type="ChEBI" id="CHEBI:58896"/>
        <dbReference type="ChEBI" id="CHEBI:71261"/>
        <dbReference type="EC" id="3.1.2.6"/>
    </reaction>
</comment>
<comment type="cofactor">
    <cofactor evidence="1">
        <name>Zn(2+)</name>
        <dbReference type="ChEBI" id="CHEBI:29105"/>
    </cofactor>
    <text evidence="1">Binds 2 Zn(2+) ions per subunit.</text>
</comment>
<comment type="pathway">
    <text evidence="1">Secondary metabolite metabolism; methylglyoxal degradation; (R)-lactate from methylglyoxal: step 2/2.</text>
</comment>
<comment type="subunit">
    <text evidence="1">Monomer.</text>
</comment>
<comment type="similarity">
    <text evidence="1">Belongs to the metallo-beta-lactamase superfamily. Glyoxalase II family.</text>
</comment>
<gene>
    <name evidence="1" type="primary">gloB</name>
    <name type="ordered locus">Spro_0909</name>
</gene>
<feature type="chain" id="PRO_1000068223" description="Hydroxyacylglutathione hydrolase">
    <location>
        <begin position="1"/>
        <end position="251"/>
    </location>
</feature>
<feature type="binding site" evidence="1">
    <location>
        <position position="53"/>
    </location>
    <ligand>
        <name>Zn(2+)</name>
        <dbReference type="ChEBI" id="CHEBI:29105"/>
        <label>1</label>
    </ligand>
</feature>
<feature type="binding site" evidence="1">
    <location>
        <position position="55"/>
    </location>
    <ligand>
        <name>Zn(2+)</name>
        <dbReference type="ChEBI" id="CHEBI:29105"/>
        <label>1</label>
    </ligand>
</feature>
<feature type="binding site" evidence="1">
    <location>
        <position position="57"/>
    </location>
    <ligand>
        <name>Zn(2+)</name>
        <dbReference type="ChEBI" id="CHEBI:29105"/>
        <label>2</label>
    </ligand>
</feature>
<feature type="binding site" evidence="1">
    <location>
        <position position="58"/>
    </location>
    <ligand>
        <name>Zn(2+)</name>
        <dbReference type="ChEBI" id="CHEBI:29105"/>
        <label>2</label>
    </ligand>
</feature>
<feature type="binding site" evidence="1">
    <location>
        <position position="110"/>
    </location>
    <ligand>
        <name>Zn(2+)</name>
        <dbReference type="ChEBI" id="CHEBI:29105"/>
        <label>1</label>
    </ligand>
</feature>
<feature type="binding site" evidence="1">
    <location>
        <position position="127"/>
    </location>
    <ligand>
        <name>Zn(2+)</name>
        <dbReference type="ChEBI" id="CHEBI:29105"/>
        <label>1</label>
    </ligand>
</feature>
<feature type="binding site" evidence="1">
    <location>
        <position position="127"/>
    </location>
    <ligand>
        <name>Zn(2+)</name>
        <dbReference type="ChEBI" id="CHEBI:29105"/>
        <label>2</label>
    </ligand>
</feature>
<feature type="binding site" evidence="1">
    <location>
        <position position="165"/>
    </location>
    <ligand>
        <name>Zn(2+)</name>
        <dbReference type="ChEBI" id="CHEBI:29105"/>
        <label>2</label>
    </ligand>
</feature>
<sequence length="251" mass="28173">MNLISIPAFQDNYIWLLDNQQGHCIIVDPGEAQPVLETLDRLNLTPDAIVLTHHHHDHVGGVAQIVARYSGLKVYGPQETADKGANHIVHDGETIEINGQKFATIAVPGHTLGHVAFYSAPYLFCGDTIFSAGCGRLFEGTAEQMFNSFQQLAQLPDNTLICCAHEYTLSNLKFARAILPKDRHIETYQQQVEALRAKGQSSVPTTLQLERKINLFLRCHDTDLQRELGFHTPPEHLHSVFSELRLRKDNF</sequence>
<dbReference type="EC" id="3.1.2.6" evidence="1"/>
<dbReference type="EMBL" id="CP000826">
    <property type="protein sequence ID" value="ABV40015.1"/>
    <property type="molecule type" value="Genomic_DNA"/>
</dbReference>
<dbReference type="SMR" id="A8GA75"/>
<dbReference type="STRING" id="399741.Spro_0909"/>
<dbReference type="KEGG" id="spe:Spro_0909"/>
<dbReference type="eggNOG" id="COG0491">
    <property type="taxonomic scope" value="Bacteria"/>
</dbReference>
<dbReference type="HOGENOM" id="CLU_030571_4_1_6"/>
<dbReference type="OrthoDB" id="9802248at2"/>
<dbReference type="UniPathway" id="UPA00619">
    <property type="reaction ID" value="UER00676"/>
</dbReference>
<dbReference type="GO" id="GO:0004416">
    <property type="term" value="F:hydroxyacylglutathione hydrolase activity"/>
    <property type="evidence" value="ECO:0007669"/>
    <property type="project" value="UniProtKB-UniRule"/>
</dbReference>
<dbReference type="GO" id="GO:0046872">
    <property type="term" value="F:metal ion binding"/>
    <property type="evidence" value="ECO:0007669"/>
    <property type="project" value="UniProtKB-KW"/>
</dbReference>
<dbReference type="GO" id="GO:0019243">
    <property type="term" value="P:methylglyoxal catabolic process to D-lactate via S-lactoyl-glutathione"/>
    <property type="evidence" value="ECO:0007669"/>
    <property type="project" value="InterPro"/>
</dbReference>
<dbReference type="CDD" id="cd07723">
    <property type="entry name" value="hydroxyacylglutathione_hydrolase_MBL-fold"/>
    <property type="match status" value="1"/>
</dbReference>
<dbReference type="Gene3D" id="3.60.15.10">
    <property type="entry name" value="Ribonuclease Z/Hydroxyacylglutathione hydrolase-like"/>
    <property type="match status" value="1"/>
</dbReference>
<dbReference type="HAMAP" id="MF_01374">
    <property type="entry name" value="Glyoxalase_2"/>
    <property type="match status" value="1"/>
</dbReference>
<dbReference type="InterPro" id="IPR035680">
    <property type="entry name" value="Clx_II_MBL"/>
</dbReference>
<dbReference type="InterPro" id="IPR050110">
    <property type="entry name" value="Glyoxalase_II_hydrolase"/>
</dbReference>
<dbReference type="InterPro" id="IPR032282">
    <property type="entry name" value="HAGH_C"/>
</dbReference>
<dbReference type="InterPro" id="IPR017782">
    <property type="entry name" value="Hydroxyacylglutathione_Hdrlase"/>
</dbReference>
<dbReference type="InterPro" id="IPR001279">
    <property type="entry name" value="Metallo-B-lactamas"/>
</dbReference>
<dbReference type="InterPro" id="IPR036866">
    <property type="entry name" value="RibonucZ/Hydroxyglut_hydro"/>
</dbReference>
<dbReference type="NCBIfam" id="TIGR03413">
    <property type="entry name" value="GSH_gloB"/>
    <property type="match status" value="1"/>
</dbReference>
<dbReference type="PANTHER" id="PTHR43705">
    <property type="entry name" value="HYDROXYACYLGLUTATHIONE HYDROLASE"/>
    <property type="match status" value="1"/>
</dbReference>
<dbReference type="PANTHER" id="PTHR43705:SF1">
    <property type="entry name" value="HYDROXYACYLGLUTATHIONE HYDROLASE GLOB"/>
    <property type="match status" value="1"/>
</dbReference>
<dbReference type="Pfam" id="PF16123">
    <property type="entry name" value="HAGH_C"/>
    <property type="match status" value="1"/>
</dbReference>
<dbReference type="Pfam" id="PF00753">
    <property type="entry name" value="Lactamase_B"/>
    <property type="match status" value="1"/>
</dbReference>
<dbReference type="PIRSF" id="PIRSF005457">
    <property type="entry name" value="Glx"/>
    <property type="match status" value="1"/>
</dbReference>
<dbReference type="SMART" id="SM00849">
    <property type="entry name" value="Lactamase_B"/>
    <property type="match status" value="1"/>
</dbReference>
<dbReference type="SUPFAM" id="SSF56281">
    <property type="entry name" value="Metallo-hydrolase/oxidoreductase"/>
    <property type="match status" value="1"/>
</dbReference>
<name>GLO2_SERP5</name>
<protein>
    <recommendedName>
        <fullName evidence="1">Hydroxyacylglutathione hydrolase</fullName>
        <ecNumber evidence="1">3.1.2.6</ecNumber>
    </recommendedName>
    <alternativeName>
        <fullName evidence="1">Glyoxalase II</fullName>
        <shortName evidence="1">Glx II</shortName>
    </alternativeName>
</protein>
<evidence type="ECO:0000255" key="1">
    <source>
        <dbReference type="HAMAP-Rule" id="MF_01374"/>
    </source>
</evidence>
<proteinExistence type="inferred from homology"/>
<accession>A8GA75</accession>